<feature type="chain" id="PRO_0000354479" description="Large ribosomal subunit protein uL22">
    <location>
        <begin position="1"/>
        <end position="121"/>
    </location>
</feature>
<comment type="function">
    <text evidence="1">This protein binds specifically to 23S rRNA; its binding is stimulated by other ribosomal proteins, e.g. L4, L17, and L20. It is important during the early stages of 50S assembly. It makes multiple contacts with different domains of the 23S rRNA in the assembled 50S subunit and ribosome (By similarity).</text>
</comment>
<comment type="function">
    <text evidence="1">The globular domain of the protein is located near the polypeptide exit tunnel on the outside of the subunit, while an extended beta-hairpin is found that lines the wall of the exit tunnel in the center of the 70S ribosome.</text>
</comment>
<comment type="subunit">
    <text evidence="1">Part of the 50S ribosomal subunit.</text>
</comment>
<comment type="similarity">
    <text evidence="1">Belongs to the universal ribosomal protein uL22 family.</text>
</comment>
<dbReference type="EMBL" id="CP001130">
    <property type="protein sequence ID" value="ACG56960.1"/>
    <property type="molecule type" value="Genomic_DNA"/>
</dbReference>
<dbReference type="RefSeq" id="WP_012513316.1">
    <property type="nucleotide sequence ID" value="NC_011126.1"/>
</dbReference>
<dbReference type="SMR" id="B4U749"/>
<dbReference type="STRING" id="380749.HY04AAS1_0270"/>
<dbReference type="KEGG" id="hya:HY04AAS1_0270"/>
<dbReference type="eggNOG" id="COG0091">
    <property type="taxonomic scope" value="Bacteria"/>
</dbReference>
<dbReference type="HOGENOM" id="CLU_083987_3_3_0"/>
<dbReference type="OrthoDB" id="9805969at2"/>
<dbReference type="GO" id="GO:0022625">
    <property type="term" value="C:cytosolic large ribosomal subunit"/>
    <property type="evidence" value="ECO:0007669"/>
    <property type="project" value="TreeGrafter"/>
</dbReference>
<dbReference type="GO" id="GO:0019843">
    <property type="term" value="F:rRNA binding"/>
    <property type="evidence" value="ECO:0007669"/>
    <property type="project" value="UniProtKB-UniRule"/>
</dbReference>
<dbReference type="GO" id="GO:0003735">
    <property type="term" value="F:structural constituent of ribosome"/>
    <property type="evidence" value="ECO:0007669"/>
    <property type="project" value="InterPro"/>
</dbReference>
<dbReference type="GO" id="GO:0006412">
    <property type="term" value="P:translation"/>
    <property type="evidence" value="ECO:0007669"/>
    <property type="project" value="UniProtKB-UniRule"/>
</dbReference>
<dbReference type="CDD" id="cd00336">
    <property type="entry name" value="Ribosomal_L22"/>
    <property type="match status" value="1"/>
</dbReference>
<dbReference type="Gene3D" id="3.90.470.10">
    <property type="entry name" value="Ribosomal protein L22/L17"/>
    <property type="match status" value="1"/>
</dbReference>
<dbReference type="HAMAP" id="MF_01331_B">
    <property type="entry name" value="Ribosomal_uL22_B"/>
    <property type="match status" value="1"/>
</dbReference>
<dbReference type="InterPro" id="IPR001063">
    <property type="entry name" value="Ribosomal_uL22"/>
</dbReference>
<dbReference type="InterPro" id="IPR005727">
    <property type="entry name" value="Ribosomal_uL22_bac/chlpt-type"/>
</dbReference>
<dbReference type="InterPro" id="IPR047867">
    <property type="entry name" value="Ribosomal_uL22_bac/org-type"/>
</dbReference>
<dbReference type="InterPro" id="IPR018260">
    <property type="entry name" value="Ribosomal_uL22_CS"/>
</dbReference>
<dbReference type="InterPro" id="IPR036394">
    <property type="entry name" value="Ribosomal_uL22_sf"/>
</dbReference>
<dbReference type="NCBIfam" id="TIGR01044">
    <property type="entry name" value="rplV_bact"/>
    <property type="match status" value="1"/>
</dbReference>
<dbReference type="PANTHER" id="PTHR13501">
    <property type="entry name" value="CHLOROPLAST 50S RIBOSOMAL PROTEIN L22-RELATED"/>
    <property type="match status" value="1"/>
</dbReference>
<dbReference type="PANTHER" id="PTHR13501:SF8">
    <property type="entry name" value="LARGE RIBOSOMAL SUBUNIT PROTEIN UL22M"/>
    <property type="match status" value="1"/>
</dbReference>
<dbReference type="Pfam" id="PF00237">
    <property type="entry name" value="Ribosomal_L22"/>
    <property type="match status" value="1"/>
</dbReference>
<dbReference type="SUPFAM" id="SSF54843">
    <property type="entry name" value="Ribosomal protein L22"/>
    <property type="match status" value="1"/>
</dbReference>
<dbReference type="PROSITE" id="PS00464">
    <property type="entry name" value="RIBOSOMAL_L22"/>
    <property type="match status" value="1"/>
</dbReference>
<proteinExistence type="inferred from homology"/>
<evidence type="ECO:0000255" key="1">
    <source>
        <dbReference type="HAMAP-Rule" id="MF_01331"/>
    </source>
</evidence>
<evidence type="ECO:0000305" key="2"/>
<organism>
    <name type="scientific">Hydrogenobaculum sp. (strain Y04AAS1)</name>
    <dbReference type="NCBI Taxonomy" id="380749"/>
    <lineage>
        <taxon>Bacteria</taxon>
        <taxon>Pseudomonadati</taxon>
        <taxon>Aquificota</taxon>
        <taxon>Aquificia</taxon>
        <taxon>Aquificales</taxon>
        <taxon>Aquificaceae</taxon>
        <taxon>Hydrogenobaculum</taxon>
    </lineage>
</organism>
<protein>
    <recommendedName>
        <fullName evidence="1">Large ribosomal subunit protein uL22</fullName>
    </recommendedName>
    <alternativeName>
        <fullName evidence="2">50S ribosomal protein L22</fullName>
    </alternativeName>
</protein>
<gene>
    <name evidence="1" type="primary">rplV</name>
    <name type="ordered locus">HY04AAS1_0270</name>
</gene>
<keyword id="KW-0687">Ribonucleoprotein</keyword>
<keyword id="KW-0689">Ribosomal protein</keyword>
<keyword id="KW-0694">RNA-binding</keyword>
<keyword id="KW-0699">rRNA-binding</keyword>
<accession>B4U749</accession>
<name>RL22_HYDS0</name>
<reference key="1">
    <citation type="journal article" date="2009" name="J. Bacteriol.">
        <title>Complete and draft genome sequences of six members of the Aquificales.</title>
        <authorList>
            <person name="Reysenbach A.-L."/>
            <person name="Hamamura N."/>
            <person name="Podar M."/>
            <person name="Griffiths E."/>
            <person name="Ferreira S."/>
            <person name="Hochstein R."/>
            <person name="Heidelberg J."/>
            <person name="Johnson J."/>
            <person name="Mead D."/>
            <person name="Pohorille A."/>
            <person name="Sarmiento M."/>
            <person name="Schweighofer K."/>
            <person name="Seshadri R."/>
            <person name="Voytek M.A."/>
        </authorList>
    </citation>
    <scope>NUCLEOTIDE SEQUENCE [LARGE SCALE GENOMIC DNA]</scope>
    <source>
        <strain>Y04AAS1</strain>
    </source>
</reference>
<sequence>MSIEVVSKAVHKNARISPLKASQVLRLLRGKPVEYAMYQLSFMNKKAAVIIKNVLKSAVANAEQKGIDPTKLVILEAKADKGIMFRKWMPRAHGRATMMRKNTSHITIALGELQEATEEAK</sequence>